<accession>Q72MK0</accession>
<reference key="1">
    <citation type="journal article" date="2004" name="J. Bacteriol.">
        <title>Comparative genomics of two Leptospira interrogans serovars reveals novel insights into physiology and pathogenesis.</title>
        <authorList>
            <person name="Nascimento A.L.T.O."/>
            <person name="Ko A.I."/>
            <person name="Martins E.A.L."/>
            <person name="Monteiro-Vitorello C.B."/>
            <person name="Ho P.L."/>
            <person name="Haake D.A."/>
            <person name="Verjovski-Almeida S."/>
            <person name="Hartskeerl R.A."/>
            <person name="Marques M.V."/>
            <person name="Oliveira M.C."/>
            <person name="Menck C.F.M."/>
            <person name="Leite L.C.C."/>
            <person name="Carrer H."/>
            <person name="Coutinho L.L."/>
            <person name="Degrave W.M."/>
            <person name="Dellagostin O.A."/>
            <person name="El-Dorry H."/>
            <person name="Ferro E.S."/>
            <person name="Ferro M.I.T."/>
            <person name="Furlan L.R."/>
            <person name="Gamberini M."/>
            <person name="Giglioti E.A."/>
            <person name="Goes-Neto A."/>
            <person name="Goldman G.H."/>
            <person name="Goldman M.H.S."/>
            <person name="Harakava R."/>
            <person name="Jeronimo S.M.B."/>
            <person name="Junqueira-de-Azevedo I.L.M."/>
            <person name="Kimura E.T."/>
            <person name="Kuramae E.E."/>
            <person name="Lemos E.G.M."/>
            <person name="Lemos M.V.F."/>
            <person name="Marino C.L."/>
            <person name="Nunes L.R."/>
            <person name="de Oliveira R.C."/>
            <person name="Pereira G.G."/>
            <person name="Reis M.S."/>
            <person name="Schriefer A."/>
            <person name="Siqueira W.J."/>
            <person name="Sommer P."/>
            <person name="Tsai S.M."/>
            <person name="Simpson A.J.G."/>
            <person name="Ferro J.A."/>
            <person name="Camargo L.E.A."/>
            <person name="Kitajima J.P."/>
            <person name="Setubal J.C."/>
            <person name="Van Sluys M.A."/>
        </authorList>
    </citation>
    <scope>NUCLEOTIDE SEQUENCE [LARGE SCALE GENOMIC DNA]</scope>
    <source>
        <strain>Fiocruz L1-130</strain>
    </source>
</reference>
<proteinExistence type="inferred from homology"/>
<name>RSGA_LEPIC</name>
<dbReference type="EC" id="3.6.1.-" evidence="1"/>
<dbReference type="EMBL" id="AE016823">
    <property type="protein sequence ID" value="AAS71738.1"/>
    <property type="molecule type" value="Genomic_DNA"/>
</dbReference>
<dbReference type="RefSeq" id="WP_000082164.1">
    <property type="nucleotide sequence ID" value="NC_005823.1"/>
</dbReference>
<dbReference type="SMR" id="Q72MK0"/>
<dbReference type="GeneID" id="61143059"/>
<dbReference type="KEGG" id="lic:LIC_13193"/>
<dbReference type="HOGENOM" id="CLU_033617_0_1_12"/>
<dbReference type="Proteomes" id="UP000007037">
    <property type="component" value="Chromosome I"/>
</dbReference>
<dbReference type="GO" id="GO:0005737">
    <property type="term" value="C:cytoplasm"/>
    <property type="evidence" value="ECO:0007669"/>
    <property type="project" value="UniProtKB-SubCell"/>
</dbReference>
<dbReference type="GO" id="GO:0005525">
    <property type="term" value="F:GTP binding"/>
    <property type="evidence" value="ECO:0007669"/>
    <property type="project" value="UniProtKB-UniRule"/>
</dbReference>
<dbReference type="GO" id="GO:0003924">
    <property type="term" value="F:GTPase activity"/>
    <property type="evidence" value="ECO:0007669"/>
    <property type="project" value="UniProtKB-UniRule"/>
</dbReference>
<dbReference type="GO" id="GO:0046872">
    <property type="term" value="F:metal ion binding"/>
    <property type="evidence" value="ECO:0007669"/>
    <property type="project" value="UniProtKB-KW"/>
</dbReference>
<dbReference type="GO" id="GO:0019843">
    <property type="term" value="F:rRNA binding"/>
    <property type="evidence" value="ECO:0007669"/>
    <property type="project" value="UniProtKB-KW"/>
</dbReference>
<dbReference type="GO" id="GO:0042274">
    <property type="term" value="P:ribosomal small subunit biogenesis"/>
    <property type="evidence" value="ECO:0007669"/>
    <property type="project" value="UniProtKB-UniRule"/>
</dbReference>
<dbReference type="CDD" id="cd01854">
    <property type="entry name" value="YjeQ_EngC"/>
    <property type="match status" value="1"/>
</dbReference>
<dbReference type="Gene3D" id="3.40.50.300">
    <property type="entry name" value="P-loop containing nucleotide triphosphate hydrolases"/>
    <property type="match status" value="1"/>
</dbReference>
<dbReference type="Gene3D" id="1.10.40.50">
    <property type="entry name" value="Probable gtpase engc, domain 3"/>
    <property type="match status" value="1"/>
</dbReference>
<dbReference type="HAMAP" id="MF_01820">
    <property type="entry name" value="GTPase_RsgA"/>
    <property type="match status" value="1"/>
</dbReference>
<dbReference type="InterPro" id="IPR030378">
    <property type="entry name" value="G_CP_dom"/>
</dbReference>
<dbReference type="InterPro" id="IPR027417">
    <property type="entry name" value="P-loop_NTPase"/>
</dbReference>
<dbReference type="InterPro" id="IPR004881">
    <property type="entry name" value="Ribosome_biogen_GTPase_RsgA"/>
</dbReference>
<dbReference type="InterPro" id="IPR010914">
    <property type="entry name" value="RsgA_GTPase_dom"/>
</dbReference>
<dbReference type="NCBIfam" id="TIGR00157">
    <property type="entry name" value="ribosome small subunit-dependent GTPase A"/>
    <property type="match status" value="1"/>
</dbReference>
<dbReference type="PANTHER" id="PTHR32120">
    <property type="entry name" value="SMALL RIBOSOMAL SUBUNIT BIOGENESIS GTPASE RSGA"/>
    <property type="match status" value="1"/>
</dbReference>
<dbReference type="PANTHER" id="PTHR32120:SF10">
    <property type="entry name" value="SMALL RIBOSOMAL SUBUNIT BIOGENESIS GTPASE RSGA"/>
    <property type="match status" value="1"/>
</dbReference>
<dbReference type="Pfam" id="PF03193">
    <property type="entry name" value="RsgA_GTPase"/>
    <property type="match status" value="1"/>
</dbReference>
<dbReference type="SUPFAM" id="SSF52540">
    <property type="entry name" value="P-loop containing nucleoside triphosphate hydrolases"/>
    <property type="match status" value="1"/>
</dbReference>
<dbReference type="PROSITE" id="PS50936">
    <property type="entry name" value="ENGC_GTPASE"/>
    <property type="match status" value="1"/>
</dbReference>
<dbReference type="PROSITE" id="PS51721">
    <property type="entry name" value="G_CP"/>
    <property type="match status" value="1"/>
</dbReference>
<sequence length="359" mass="39938">MSQPNSILMSYGWDPSIYLEEPKLLEGLKPGRVLAVYGEYSKIIIEQGEKKGIFSGALMASGESIVTGDWVLIREIEGDELCIVEKILPRKTFLRRSNPGKRKGSQAIASNIDLLLVIMGLDNDYSPRRIERYLFLAKVSGAQVTIVLNKKDLCMDPENKFMEIKMIAGETPIEMISALDLKQTRTILQWIDPGKTIAFLGSSGAGKSTIINSLLGGEIQKTNEVKVSDGTGKHTTTRRELFLLPSGGVLMDNPGIREVGLFSEGSEDELEEVFPEIAVAAEECRFNDCSHNEEPNCGVVAAVKDGRISEARYFSYLKLSKELMAYQALNDPEEARKKKQKDKQMSKALQKRLKDKGRK</sequence>
<organism>
    <name type="scientific">Leptospira interrogans serogroup Icterohaemorrhagiae serovar copenhageni (strain Fiocruz L1-130)</name>
    <dbReference type="NCBI Taxonomy" id="267671"/>
    <lineage>
        <taxon>Bacteria</taxon>
        <taxon>Pseudomonadati</taxon>
        <taxon>Spirochaetota</taxon>
        <taxon>Spirochaetia</taxon>
        <taxon>Leptospirales</taxon>
        <taxon>Leptospiraceae</taxon>
        <taxon>Leptospira</taxon>
    </lineage>
</organism>
<protein>
    <recommendedName>
        <fullName evidence="1">Small ribosomal subunit biogenesis GTPase RsgA</fullName>
        <ecNumber evidence="1">3.6.1.-</ecNumber>
    </recommendedName>
</protein>
<keyword id="KW-0963">Cytoplasm</keyword>
<keyword id="KW-0342">GTP-binding</keyword>
<keyword id="KW-0378">Hydrolase</keyword>
<keyword id="KW-0479">Metal-binding</keyword>
<keyword id="KW-0547">Nucleotide-binding</keyword>
<keyword id="KW-0690">Ribosome biogenesis</keyword>
<keyword id="KW-0694">RNA-binding</keyword>
<keyword id="KW-0699">rRNA-binding</keyword>
<keyword id="KW-0862">Zinc</keyword>
<gene>
    <name evidence="1" type="primary">rsgA</name>
    <name type="ordered locus">LIC_13193</name>
</gene>
<feature type="chain" id="PRO_0000171485" description="Small ribosomal subunit biogenesis GTPase RsgA">
    <location>
        <begin position="1"/>
        <end position="359"/>
    </location>
</feature>
<feature type="domain" description="CP-type G" evidence="2">
    <location>
        <begin position="101"/>
        <end position="259"/>
    </location>
</feature>
<feature type="region of interest" description="Disordered" evidence="3">
    <location>
        <begin position="331"/>
        <end position="359"/>
    </location>
</feature>
<feature type="compositionally biased region" description="Basic residues" evidence="3">
    <location>
        <begin position="349"/>
        <end position="359"/>
    </location>
</feature>
<feature type="binding site" evidence="1">
    <location>
        <begin position="149"/>
        <end position="152"/>
    </location>
    <ligand>
        <name>GTP</name>
        <dbReference type="ChEBI" id="CHEBI:37565"/>
    </ligand>
</feature>
<feature type="binding site" evidence="1">
    <location>
        <begin position="201"/>
        <end position="209"/>
    </location>
    <ligand>
        <name>GTP</name>
        <dbReference type="ChEBI" id="CHEBI:37565"/>
    </ligand>
</feature>
<feature type="binding site" evidence="1">
    <location>
        <position position="284"/>
    </location>
    <ligand>
        <name>Zn(2+)</name>
        <dbReference type="ChEBI" id="CHEBI:29105"/>
    </ligand>
</feature>
<feature type="binding site" evidence="1">
    <location>
        <position position="289"/>
    </location>
    <ligand>
        <name>Zn(2+)</name>
        <dbReference type="ChEBI" id="CHEBI:29105"/>
    </ligand>
</feature>
<feature type="binding site" evidence="1">
    <location>
        <position position="291"/>
    </location>
    <ligand>
        <name>Zn(2+)</name>
        <dbReference type="ChEBI" id="CHEBI:29105"/>
    </ligand>
</feature>
<feature type="binding site" evidence="1">
    <location>
        <position position="297"/>
    </location>
    <ligand>
        <name>Zn(2+)</name>
        <dbReference type="ChEBI" id="CHEBI:29105"/>
    </ligand>
</feature>
<evidence type="ECO:0000255" key="1">
    <source>
        <dbReference type="HAMAP-Rule" id="MF_01820"/>
    </source>
</evidence>
<evidence type="ECO:0000255" key="2">
    <source>
        <dbReference type="PROSITE-ProRule" id="PRU01058"/>
    </source>
</evidence>
<evidence type="ECO:0000256" key="3">
    <source>
        <dbReference type="SAM" id="MobiDB-lite"/>
    </source>
</evidence>
<comment type="function">
    <text evidence="1">One of several proteins that assist in the late maturation steps of the functional core of the 30S ribosomal subunit. Helps release RbfA from mature subunits. May play a role in the assembly of ribosomal proteins into the subunit. Circularly permuted GTPase that catalyzes slow GTP hydrolysis, GTPase activity is stimulated by the 30S ribosomal subunit.</text>
</comment>
<comment type="cofactor">
    <cofactor evidence="1">
        <name>Zn(2+)</name>
        <dbReference type="ChEBI" id="CHEBI:29105"/>
    </cofactor>
    <text evidence="1">Binds 1 zinc ion per subunit.</text>
</comment>
<comment type="subunit">
    <text evidence="1">Monomer. Associates with 30S ribosomal subunit, binds 16S rRNA.</text>
</comment>
<comment type="subcellular location">
    <subcellularLocation>
        <location evidence="1">Cytoplasm</location>
    </subcellularLocation>
</comment>
<comment type="similarity">
    <text evidence="1">Belongs to the TRAFAC class YlqF/YawG GTPase family. RsgA subfamily.</text>
</comment>